<keyword id="KW-0067">ATP-binding</keyword>
<keyword id="KW-0997">Cell inner membrane</keyword>
<keyword id="KW-1003">Cell membrane</keyword>
<keyword id="KW-0472">Membrane</keyword>
<keyword id="KW-0547">Nucleotide-binding</keyword>
<keyword id="KW-1185">Reference proteome</keyword>
<keyword id="KW-0762">Sugar transport</keyword>
<keyword id="KW-1278">Translocase</keyword>
<keyword id="KW-0813">Transport</keyword>
<dbReference type="EC" id="7.6.2.10" evidence="1"/>
<dbReference type="EMBL" id="CP000490">
    <property type="protein sequence ID" value="ABL72251.1"/>
    <property type="molecule type" value="Genomic_DNA"/>
</dbReference>
<dbReference type="RefSeq" id="WP_011750416.1">
    <property type="nucleotide sequence ID" value="NC_008687.1"/>
</dbReference>
<dbReference type="SMR" id="A1B9Q7"/>
<dbReference type="STRING" id="318586.Pden_4187"/>
<dbReference type="EnsemblBacteria" id="ABL72251">
    <property type="protein sequence ID" value="ABL72251"/>
    <property type="gene ID" value="Pden_4187"/>
</dbReference>
<dbReference type="GeneID" id="93453853"/>
<dbReference type="KEGG" id="pde:Pden_4187"/>
<dbReference type="eggNOG" id="COG3842">
    <property type="taxonomic scope" value="Bacteria"/>
</dbReference>
<dbReference type="HOGENOM" id="CLU_000604_1_1_5"/>
<dbReference type="OrthoDB" id="9802264at2"/>
<dbReference type="Proteomes" id="UP000000361">
    <property type="component" value="Chromosome 2"/>
</dbReference>
<dbReference type="GO" id="GO:0055052">
    <property type="term" value="C:ATP-binding cassette (ABC) transporter complex, substrate-binding subunit-containing"/>
    <property type="evidence" value="ECO:0007669"/>
    <property type="project" value="TreeGrafter"/>
</dbReference>
<dbReference type="GO" id="GO:0015430">
    <property type="term" value="F:ABC-type glycerol-3-phosphate transporter activity"/>
    <property type="evidence" value="ECO:0007669"/>
    <property type="project" value="UniProtKB-EC"/>
</dbReference>
<dbReference type="GO" id="GO:0005524">
    <property type="term" value="F:ATP binding"/>
    <property type="evidence" value="ECO:0007669"/>
    <property type="project" value="UniProtKB-KW"/>
</dbReference>
<dbReference type="GO" id="GO:0016887">
    <property type="term" value="F:ATP hydrolysis activity"/>
    <property type="evidence" value="ECO:0007669"/>
    <property type="project" value="InterPro"/>
</dbReference>
<dbReference type="GO" id="GO:0008643">
    <property type="term" value="P:carbohydrate transport"/>
    <property type="evidence" value="ECO:0007669"/>
    <property type="project" value="InterPro"/>
</dbReference>
<dbReference type="CDD" id="cd03301">
    <property type="entry name" value="ABC_MalK_N"/>
    <property type="match status" value="1"/>
</dbReference>
<dbReference type="FunFam" id="3.40.50.300:FF:000042">
    <property type="entry name" value="Maltose/maltodextrin ABC transporter, ATP-binding protein"/>
    <property type="match status" value="1"/>
</dbReference>
<dbReference type="Gene3D" id="2.40.50.100">
    <property type="match status" value="1"/>
</dbReference>
<dbReference type="Gene3D" id="2.40.50.140">
    <property type="entry name" value="Nucleic acid-binding proteins"/>
    <property type="match status" value="1"/>
</dbReference>
<dbReference type="Gene3D" id="3.40.50.300">
    <property type="entry name" value="P-loop containing nucleotide triphosphate hydrolases"/>
    <property type="match status" value="1"/>
</dbReference>
<dbReference type="InterPro" id="IPR003593">
    <property type="entry name" value="AAA+_ATPase"/>
</dbReference>
<dbReference type="InterPro" id="IPR003439">
    <property type="entry name" value="ABC_transporter-like_ATP-bd"/>
</dbReference>
<dbReference type="InterPro" id="IPR017871">
    <property type="entry name" value="ABC_transporter-like_CS"/>
</dbReference>
<dbReference type="InterPro" id="IPR015855">
    <property type="entry name" value="ABC_transpr_MalK-like"/>
</dbReference>
<dbReference type="InterPro" id="IPR047641">
    <property type="entry name" value="ABC_transpr_MalK/UgpC-like"/>
</dbReference>
<dbReference type="InterPro" id="IPR008995">
    <property type="entry name" value="Mo/tungstate-bd_C_term_dom"/>
</dbReference>
<dbReference type="InterPro" id="IPR012340">
    <property type="entry name" value="NA-bd_OB-fold"/>
</dbReference>
<dbReference type="InterPro" id="IPR027417">
    <property type="entry name" value="P-loop_NTPase"/>
</dbReference>
<dbReference type="InterPro" id="IPR013611">
    <property type="entry name" value="Transp-assoc_OB_typ2"/>
</dbReference>
<dbReference type="NCBIfam" id="NF008653">
    <property type="entry name" value="PRK11650.1"/>
    <property type="match status" value="1"/>
</dbReference>
<dbReference type="PANTHER" id="PTHR43875">
    <property type="entry name" value="MALTODEXTRIN IMPORT ATP-BINDING PROTEIN MSMX"/>
    <property type="match status" value="1"/>
</dbReference>
<dbReference type="PANTHER" id="PTHR43875:SF1">
    <property type="entry name" value="OSMOPROTECTIVE COMPOUNDS UPTAKE ATP-BINDING PROTEIN GGTA"/>
    <property type="match status" value="1"/>
</dbReference>
<dbReference type="Pfam" id="PF00005">
    <property type="entry name" value="ABC_tran"/>
    <property type="match status" value="1"/>
</dbReference>
<dbReference type="Pfam" id="PF08402">
    <property type="entry name" value="TOBE_2"/>
    <property type="match status" value="1"/>
</dbReference>
<dbReference type="SMART" id="SM00382">
    <property type="entry name" value="AAA"/>
    <property type="match status" value="1"/>
</dbReference>
<dbReference type="SUPFAM" id="SSF50331">
    <property type="entry name" value="MOP-like"/>
    <property type="match status" value="1"/>
</dbReference>
<dbReference type="SUPFAM" id="SSF52540">
    <property type="entry name" value="P-loop containing nucleoside triphosphate hydrolases"/>
    <property type="match status" value="1"/>
</dbReference>
<dbReference type="PROSITE" id="PS00211">
    <property type="entry name" value="ABC_TRANSPORTER_1"/>
    <property type="match status" value="1"/>
</dbReference>
<dbReference type="PROSITE" id="PS50893">
    <property type="entry name" value="ABC_TRANSPORTER_2"/>
    <property type="match status" value="1"/>
</dbReference>
<dbReference type="PROSITE" id="PS51315">
    <property type="entry name" value="UGPC"/>
    <property type="match status" value="1"/>
</dbReference>
<gene>
    <name evidence="1" type="primary">ugpC</name>
    <name type="ordered locus">Pden_4187</name>
</gene>
<organism>
    <name type="scientific">Paracoccus denitrificans (strain Pd 1222)</name>
    <dbReference type="NCBI Taxonomy" id="318586"/>
    <lineage>
        <taxon>Bacteria</taxon>
        <taxon>Pseudomonadati</taxon>
        <taxon>Pseudomonadota</taxon>
        <taxon>Alphaproteobacteria</taxon>
        <taxon>Rhodobacterales</taxon>
        <taxon>Paracoccaceae</taxon>
        <taxon>Paracoccus</taxon>
    </lineage>
</organism>
<feature type="chain" id="PRO_0000289756" description="sn-glycerol-3-phosphate import ATP-binding protein UgpC">
    <location>
        <begin position="1"/>
        <end position="353"/>
    </location>
</feature>
<feature type="domain" description="ABC transporter" evidence="1">
    <location>
        <begin position="4"/>
        <end position="234"/>
    </location>
</feature>
<feature type="binding site" evidence="1">
    <location>
        <begin position="36"/>
        <end position="43"/>
    </location>
    <ligand>
        <name>ATP</name>
        <dbReference type="ChEBI" id="CHEBI:30616"/>
    </ligand>
</feature>
<proteinExistence type="inferred from homology"/>
<protein>
    <recommendedName>
        <fullName evidence="1">sn-glycerol-3-phosphate import ATP-binding protein UgpC</fullName>
        <ecNumber evidence="1">7.6.2.10</ecNumber>
    </recommendedName>
</protein>
<accession>A1B9Q7</accession>
<comment type="function">
    <text evidence="1">Part of the ABC transporter complex UgpBAEC involved in sn-glycerol-3-phosphate (G3P) import. Responsible for energy coupling to the transport system.</text>
</comment>
<comment type="catalytic activity">
    <reaction evidence="1">
        <text>sn-glycerol 3-phosphate(out) + ATP + H2O = sn-glycerol 3-phosphate(in) + ADP + phosphate + H(+)</text>
        <dbReference type="Rhea" id="RHEA:21668"/>
        <dbReference type="ChEBI" id="CHEBI:15377"/>
        <dbReference type="ChEBI" id="CHEBI:15378"/>
        <dbReference type="ChEBI" id="CHEBI:30616"/>
        <dbReference type="ChEBI" id="CHEBI:43474"/>
        <dbReference type="ChEBI" id="CHEBI:57597"/>
        <dbReference type="ChEBI" id="CHEBI:456216"/>
        <dbReference type="EC" id="7.6.2.10"/>
    </reaction>
</comment>
<comment type="subunit">
    <text evidence="1">The complex is composed of two ATP-binding proteins (UgpC), two transmembrane proteins (UgpA and UgpE) and a solute-binding protein (UgpB).</text>
</comment>
<comment type="subcellular location">
    <subcellularLocation>
        <location evidence="1">Cell inner membrane</location>
        <topology evidence="1">Peripheral membrane protein</topology>
    </subcellularLocation>
</comment>
<comment type="similarity">
    <text evidence="1">Belongs to the ABC transporter superfamily. sn-glycerol-3-phosphate importer (TC 3.A.1.1.3) family.</text>
</comment>
<name>UGPC_PARDP</name>
<sequence>MARILLNDVRKSYAGNQVIHGITMEIADGEFVVIVGPSGCGKSTLLRMVAGLEAISAGTVEIGGKVVNDLEPRQRDIAMVFQNYALYPHMSVRENMAYGLKIAKLPKTEIEARVAKAATMLELEPYLDRKPRALSGGQRQRVAMGRALVREPAALLLDEPLSNLDAKLRVQMRLQIKEMHLRTGQTTLYVTHDQVEAMTLADRLIVMNKGVAEQIATPLEVYERPASEFVAGFIGSPAMNIFTVDAADGRVTLPGGAVLPLPVPRGGDLRLGLRPEHLRTAQPGEAAIPVVLRSVERLGADAFGYGMIEGSEVPMVLRLPGTSQLSRGDRVEAVPDPAHLHFFDPVSGRRIEG</sequence>
<evidence type="ECO:0000255" key="1">
    <source>
        <dbReference type="HAMAP-Rule" id="MF_01727"/>
    </source>
</evidence>
<reference key="1">
    <citation type="submission" date="2006-12" db="EMBL/GenBank/DDBJ databases">
        <title>Complete sequence of chromosome 2 of Paracoccus denitrificans PD1222.</title>
        <authorList>
            <person name="Copeland A."/>
            <person name="Lucas S."/>
            <person name="Lapidus A."/>
            <person name="Barry K."/>
            <person name="Detter J.C."/>
            <person name="Glavina del Rio T."/>
            <person name="Hammon N."/>
            <person name="Israni S."/>
            <person name="Dalin E."/>
            <person name="Tice H."/>
            <person name="Pitluck S."/>
            <person name="Munk A.C."/>
            <person name="Brettin T."/>
            <person name="Bruce D."/>
            <person name="Han C."/>
            <person name="Tapia R."/>
            <person name="Gilna P."/>
            <person name="Schmutz J."/>
            <person name="Larimer F."/>
            <person name="Land M."/>
            <person name="Hauser L."/>
            <person name="Kyrpides N."/>
            <person name="Lykidis A."/>
            <person name="Spiro S."/>
            <person name="Richardson D.J."/>
            <person name="Moir J.W.B."/>
            <person name="Ferguson S.J."/>
            <person name="van Spanning R.J.M."/>
            <person name="Richardson P."/>
        </authorList>
    </citation>
    <scope>NUCLEOTIDE SEQUENCE [LARGE SCALE GENOMIC DNA]</scope>
    <source>
        <strain>Pd 1222</strain>
    </source>
</reference>